<sequence length="144" mass="16170">MRQTTIVNREKANKKWFVVDAENQVVGRLAAFVASVLRGKTKPTFTPNADMGDYVIIINAEKAIFTAKKEEDKVYYHHSGYPGGLKSITAAKLRAKKPTAIVEKAIYGMLPHTKLGNKQRRNLFVVAGSEHKYAAQKPERLEVR</sequence>
<dbReference type="EMBL" id="CU179680">
    <property type="protein sequence ID" value="CAL59153.1"/>
    <property type="molecule type" value="Genomic_DNA"/>
</dbReference>
<dbReference type="RefSeq" id="WP_011949624.1">
    <property type="nucleotide sequence ID" value="NC_009497.1"/>
</dbReference>
<dbReference type="SMR" id="A5IYP4"/>
<dbReference type="STRING" id="347257.MAG4550"/>
<dbReference type="GeneID" id="93358196"/>
<dbReference type="KEGG" id="maa:MAG4550"/>
<dbReference type="HOGENOM" id="CLU_082184_2_2_14"/>
<dbReference type="Proteomes" id="UP000007065">
    <property type="component" value="Chromosome"/>
</dbReference>
<dbReference type="GO" id="GO:0022625">
    <property type="term" value="C:cytosolic large ribosomal subunit"/>
    <property type="evidence" value="ECO:0007669"/>
    <property type="project" value="TreeGrafter"/>
</dbReference>
<dbReference type="GO" id="GO:0003729">
    <property type="term" value="F:mRNA binding"/>
    <property type="evidence" value="ECO:0007669"/>
    <property type="project" value="TreeGrafter"/>
</dbReference>
<dbReference type="GO" id="GO:0003735">
    <property type="term" value="F:structural constituent of ribosome"/>
    <property type="evidence" value="ECO:0007669"/>
    <property type="project" value="InterPro"/>
</dbReference>
<dbReference type="GO" id="GO:0017148">
    <property type="term" value="P:negative regulation of translation"/>
    <property type="evidence" value="ECO:0007669"/>
    <property type="project" value="TreeGrafter"/>
</dbReference>
<dbReference type="GO" id="GO:0006412">
    <property type="term" value="P:translation"/>
    <property type="evidence" value="ECO:0007669"/>
    <property type="project" value="UniProtKB-UniRule"/>
</dbReference>
<dbReference type="CDD" id="cd00392">
    <property type="entry name" value="Ribosomal_L13"/>
    <property type="match status" value="1"/>
</dbReference>
<dbReference type="Gene3D" id="3.90.1180.10">
    <property type="entry name" value="Ribosomal protein L13"/>
    <property type="match status" value="1"/>
</dbReference>
<dbReference type="HAMAP" id="MF_01366">
    <property type="entry name" value="Ribosomal_uL13"/>
    <property type="match status" value="1"/>
</dbReference>
<dbReference type="InterPro" id="IPR005822">
    <property type="entry name" value="Ribosomal_uL13"/>
</dbReference>
<dbReference type="InterPro" id="IPR005823">
    <property type="entry name" value="Ribosomal_uL13_bac-type"/>
</dbReference>
<dbReference type="InterPro" id="IPR023563">
    <property type="entry name" value="Ribosomal_uL13_CS"/>
</dbReference>
<dbReference type="InterPro" id="IPR036899">
    <property type="entry name" value="Ribosomal_uL13_sf"/>
</dbReference>
<dbReference type="NCBIfam" id="TIGR01066">
    <property type="entry name" value="rplM_bact"/>
    <property type="match status" value="1"/>
</dbReference>
<dbReference type="PANTHER" id="PTHR11545:SF2">
    <property type="entry name" value="LARGE RIBOSOMAL SUBUNIT PROTEIN UL13M"/>
    <property type="match status" value="1"/>
</dbReference>
<dbReference type="PANTHER" id="PTHR11545">
    <property type="entry name" value="RIBOSOMAL PROTEIN L13"/>
    <property type="match status" value="1"/>
</dbReference>
<dbReference type="Pfam" id="PF00572">
    <property type="entry name" value="Ribosomal_L13"/>
    <property type="match status" value="1"/>
</dbReference>
<dbReference type="PIRSF" id="PIRSF002181">
    <property type="entry name" value="Ribosomal_L13"/>
    <property type="match status" value="1"/>
</dbReference>
<dbReference type="SUPFAM" id="SSF52161">
    <property type="entry name" value="Ribosomal protein L13"/>
    <property type="match status" value="1"/>
</dbReference>
<dbReference type="PROSITE" id="PS00783">
    <property type="entry name" value="RIBOSOMAL_L13"/>
    <property type="match status" value="1"/>
</dbReference>
<comment type="function">
    <text evidence="1">This protein is one of the early assembly proteins of the 50S ribosomal subunit, although it is not seen to bind rRNA by itself. It is important during the early stages of 50S assembly.</text>
</comment>
<comment type="subunit">
    <text evidence="1">Part of the 50S ribosomal subunit.</text>
</comment>
<comment type="similarity">
    <text evidence="1">Belongs to the universal ribosomal protein uL13 family.</text>
</comment>
<proteinExistence type="inferred from homology"/>
<keyword id="KW-1185">Reference proteome</keyword>
<keyword id="KW-0687">Ribonucleoprotein</keyword>
<keyword id="KW-0689">Ribosomal protein</keyword>
<reference key="1">
    <citation type="journal article" date="2007" name="PLoS Genet.">
        <title>Being pathogenic, plastic, and sexual while living with a nearly minimal bacterial genome.</title>
        <authorList>
            <person name="Sirand-Pugnet P."/>
            <person name="Lartigue C."/>
            <person name="Marenda M."/>
            <person name="Jacob D."/>
            <person name="Barre A."/>
            <person name="Barbe V."/>
            <person name="Schenowitz C."/>
            <person name="Mangenot S."/>
            <person name="Couloux A."/>
            <person name="Segurens B."/>
            <person name="de Daruvar A."/>
            <person name="Blanchard A."/>
            <person name="Citti C."/>
        </authorList>
    </citation>
    <scope>NUCLEOTIDE SEQUENCE [LARGE SCALE GENOMIC DNA]</scope>
    <source>
        <strain>NCTC 10123 / CIP 59.7 / PG2</strain>
    </source>
</reference>
<evidence type="ECO:0000255" key="1">
    <source>
        <dbReference type="HAMAP-Rule" id="MF_01366"/>
    </source>
</evidence>
<evidence type="ECO:0000305" key="2"/>
<feature type="chain" id="PRO_1000144155" description="Large ribosomal subunit protein uL13">
    <location>
        <begin position="1"/>
        <end position="144"/>
    </location>
</feature>
<accession>A5IYP4</accession>
<name>RL13_MYCAP</name>
<organism>
    <name type="scientific">Mycoplasmopsis agalactiae (strain NCTC 10123 / CIP 59.7 / PG2)</name>
    <name type="common">Mycoplasma agalactiae</name>
    <dbReference type="NCBI Taxonomy" id="347257"/>
    <lineage>
        <taxon>Bacteria</taxon>
        <taxon>Bacillati</taxon>
        <taxon>Mycoplasmatota</taxon>
        <taxon>Mycoplasmoidales</taxon>
        <taxon>Metamycoplasmataceae</taxon>
        <taxon>Mycoplasmopsis</taxon>
    </lineage>
</organism>
<gene>
    <name evidence="1" type="primary">rplM</name>
    <name type="ordered locus">MAG4550</name>
</gene>
<protein>
    <recommendedName>
        <fullName evidence="1">Large ribosomal subunit protein uL13</fullName>
    </recommendedName>
    <alternativeName>
        <fullName evidence="2">50S ribosomal protein L13</fullName>
    </alternativeName>
</protein>